<protein>
    <recommendedName>
        <fullName evidence="1">Uracil phosphoribosyltransferase</fullName>
        <ecNumber evidence="1">2.4.2.9</ecNumber>
    </recommendedName>
    <alternativeName>
        <fullName evidence="1">UMP pyrophosphorylase</fullName>
    </alternativeName>
    <alternativeName>
        <fullName evidence="1">UPRTase</fullName>
    </alternativeName>
</protein>
<evidence type="ECO:0000255" key="1">
    <source>
        <dbReference type="HAMAP-Rule" id="MF_01218"/>
    </source>
</evidence>
<evidence type="ECO:0007829" key="2">
    <source>
        <dbReference type="PDB" id="1O5O"/>
    </source>
</evidence>
<name>UPP_THEMA</name>
<reference key="1">
    <citation type="journal article" date="1999" name="Nature">
        <title>Evidence for lateral gene transfer between Archaea and Bacteria from genome sequence of Thermotoga maritima.</title>
        <authorList>
            <person name="Nelson K.E."/>
            <person name="Clayton R.A."/>
            <person name="Gill S.R."/>
            <person name="Gwinn M.L."/>
            <person name="Dodson R.J."/>
            <person name="Haft D.H."/>
            <person name="Hickey E.K."/>
            <person name="Peterson J.D."/>
            <person name="Nelson W.C."/>
            <person name="Ketchum K.A."/>
            <person name="McDonald L.A."/>
            <person name="Utterback T.R."/>
            <person name="Malek J.A."/>
            <person name="Linher K.D."/>
            <person name="Garrett M.M."/>
            <person name="Stewart A.M."/>
            <person name="Cotton M.D."/>
            <person name="Pratt M.S."/>
            <person name="Phillips C.A."/>
            <person name="Richardson D.L."/>
            <person name="Heidelberg J.F."/>
            <person name="Sutton G.G."/>
            <person name="Fleischmann R.D."/>
            <person name="Eisen J.A."/>
            <person name="White O."/>
            <person name="Salzberg S.L."/>
            <person name="Smith H.O."/>
            <person name="Venter J.C."/>
            <person name="Fraser C.M."/>
        </authorList>
    </citation>
    <scope>NUCLEOTIDE SEQUENCE [LARGE SCALE GENOMIC DNA]</scope>
    <source>
        <strain>ATCC 43589 / DSM 3109 / JCM 10099 / NBRC 100826 / MSB8</strain>
    </source>
</reference>
<reference key="2">
    <citation type="submission" date="2009-02" db="PDB data bank">
        <title>Crystal structure of uracil phosphoribosyltransferase (TM0721) from Thermotoga maritima at 2.30 A resolution.</title>
        <authorList>
            <consortium name="Joint center for structural genomics (JCSG)"/>
        </authorList>
    </citation>
    <scope>X-RAY CRYSTALLOGRAPHY (2.3 ANGSTROMS)</scope>
</reference>
<keyword id="KW-0002">3D-structure</keyword>
<keyword id="KW-0021">Allosteric enzyme</keyword>
<keyword id="KW-0328">Glycosyltransferase</keyword>
<keyword id="KW-0342">GTP-binding</keyword>
<keyword id="KW-0460">Magnesium</keyword>
<keyword id="KW-0547">Nucleotide-binding</keyword>
<keyword id="KW-1185">Reference proteome</keyword>
<keyword id="KW-0808">Transferase</keyword>
<sequence>MKNLVVVDHPLIKHKLTIMRDKNTGPKEFRELLREITLLLAYEATRHLKCEEVEVETPITKTIGYRINDKDIVVVPILRAGLVMADGILELLPNASVGHIGIYRDPETLQAVEYYAKLPPLNDDKEVFLLDPMLATGVSSIKAIEILKENGAKKITLVALIAAPEGVEAVEKKYEDVKIYVAALDERLNDHGYIIPGLGDAGDRLFRTK</sequence>
<comment type="function">
    <text evidence="1">Catalyzes the conversion of uracil and 5-phospho-alpha-D-ribose 1-diphosphate (PRPP) to UMP and diphosphate.</text>
</comment>
<comment type="catalytic activity">
    <reaction evidence="1">
        <text>UMP + diphosphate = 5-phospho-alpha-D-ribose 1-diphosphate + uracil</text>
        <dbReference type="Rhea" id="RHEA:13017"/>
        <dbReference type="ChEBI" id="CHEBI:17568"/>
        <dbReference type="ChEBI" id="CHEBI:33019"/>
        <dbReference type="ChEBI" id="CHEBI:57865"/>
        <dbReference type="ChEBI" id="CHEBI:58017"/>
        <dbReference type="EC" id="2.4.2.9"/>
    </reaction>
</comment>
<comment type="cofactor">
    <cofactor evidence="1">
        <name>Mg(2+)</name>
        <dbReference type="ChEBI" id="CHEBI:18420"/>
    </cofactor>
    <text evidence="1">Binds 1 Mg(2+) ion per subunit. The magnesium is bound as Mg-PRPP.</text>
</comment>
<comment type="activity regulation">
    <text evidence="1">Allosterically activated by GTP.</text>
</comment>
<comment type="pathway">
    <text evidence="1">Pyrimidine metabolism; UMP biosynthesis via salvage pathway; UMP from uracil: step 1/1.</text>
</comment>
<comment type="similarity">
    <text evidence="1">Belongs to the UPRTase family.</text>
</comment>
<accession>Q9WZI0</accession>
<proteinExistence type="evidence at protein level"/>
<feature type="chain" id="PRO_0000120904" description="Uracil phosphoribosyltransferase">
    <location>
        <begin position="1"/>
        <end position="209"/>
    </location>
</feature>
<feature type="binding site" evidence="1">
    <location>
        <position position="79"/>
    </location>
    <ligand>
        <name>5-phospho-alpha-D-ribose 1-diphosphate</name>
        <dbReference type="ChEBI" id="CHEBI:58017"/>
    </ligand>
</feature>
<feature type="binding site" evidence="1">
    <location>
        <position position="104"/>
    </location>
    <ligand>
        <name>5-phospho-alpha-D-ribose 1-diphosphate</name>
        <dbReference type="ChEBI" id="CHEBI:58017"/>
    </ligand>
</feature>
<feature type="binding site" evidence="1">
    <location>
        <begin position="131"/>
        <end position="139"/>
    </location>
    <ligand>
        <name>5-phospho-alpha-D-ribose 1-diphosphate</name>
        <dbReference type="ChEBI" id="CHEBI:58017"/>
    </ligand>
</feature>
<feature type="binding site" evidence="1">
    <location>
        <position position="194"/>
    </location>
    <ligand>
        <name>uracil</name>
        <dbReference type="ChEBI" id="CHEBI:17568"/>
    </ligand>
</feature>
<feature type="binding site" evidence="1">
    <location>
        <begin position="199"/>
        <end position="201"/>
    </location>
    <ligand>
        <name>uracil</name>
        <dbReference type="ChEBI" id="CHEBI:17568"/>
    </ligand>
</feature>
<feature type="binding site" evidence="1">
    <location>
        <position position="200"/>
    </location>
    <ligand>
        <name>5-phospho-alpha-D-ribose 1-diphosphate</name>
        <dbReference type="ChEBI" id="CHEBI:58017"/>
    </ligand>
</feature>
<feature type="strand" evidence="2">
    <location>
        <begin position="4"/>
        <end position="6"/>
    </location>
</feature>
<feature type="helix" evidence="2">
    <location>
        <begin position="10"/>
        <end position="20"/>
    </location>
</feature>
<feature type="helix" evidence="2">
    <location>
        <begin position="26"/>
        <end position="44"/>
    </location>
</feature>
<feature type="turn" evidence="2">
    <location>
        <begin position="45"/>
        <end position="47"/>
    </location>
</feature>
<feature type="strand" evidence="2">
    <location>
        <begin position="51"/>
        <end position="56"/>
    </location>
</feature>
<feature type="strand" evidence="2">
    <location>
        <begin position="61"/>
        <end position="66"/>
    </location>
</feature>
<feature type="strand" evidence="2">
    <location>
        <begin position="72"/>
        <end position="78"/>
    </location>
</feature>
<feature type="helix" evidence="2">
    <location>
        <begin position="81"/>
        <end position="91"/>
    </location>
</feature>
<feature type="strand" evidence="2">
    <location>
        <begin position="99"/>
        <end position="104"/>
    </location>
</feature>
<feature type="turn" evidence="2">
    <location>
        <begin position="106"/>
        <end position="108"/>
    </location>
</feature>
<feature type="strand" evidence="2">
    <location>
        <begin position="111"/>
        <end position="117"/>
    </location>
</feature>
<feature type="strand" evidence="2">
    <location>
        <begin position="126"/>
        <end position="130"/>
    </location>
</feature>
<feature type="strand" evidence="2">
    <location>
        <begin position="132"/>
        <end position="137"/>
    </location>
</feature>
<feature type="helix" evidence="2">
    <location>
        <begin position="138"/>
        <end position="149"/>
    </location>
</feature>
<feature type="strand" evidence="2">
    <location>
        <begin position="154"/>
        <end position="158"/>
    </location>
</feature>
<feature type="strand" evidence="2">
    <location>
        <begin position="160"/>
        <end position="162"/>
    </location>
</feature>
<feature type="helix" evidence="2">
    <location>
        <begin position="164"/>
        <end position="173"/>
    </location>
</feature>
<feature type="strand" evidence="2">
    <location>
        <begin position="178"/>
        <end position="184"/>
    </location>
</feature>
<feature type="strand" evidence="2">
    <location>
        <begin position="186"/>
        <end position="188"/>
    </location>
</feature>
<feature type="strand" evidence="2">
    <location>
        <begin position="194"/>
        <end position="197"/>
    </location>
</feature>
<feature type="helix" evidence="2">
    <location>
        <begin position="201"/>
        <end position="206"/>
    </location>
</feature>
<dbReference type="EC" id="2.4.2.9" evidence="1"/>
<dbReference type="EMBL" id="AE000512">
    <property type="protein sequence ID" value="AAD35803.1"/>
    <property type="molecule type" value="Genomic_DNA"/>
</dbReference>
<dbReference type="PIR" id="G72341">
    <property type="entry name" value="G72341"/>
</dbReference>
<dbReference type="RefSeq" id="NP_228530.1">
    <property type="nucleotide sequence ID" value="NC_000853.1"/>
</dbReference>
<dbReference type="RefSeq" id="WP_004081012.1">
    <property type="nucleotide sequence ID" value="NZ_CP011107.1"/>
</dbReference>
<dbReference type="PDB" id="1O5O">
    <property type="method" value="X-ray"/>
    <property type="resolution" value="2.30 A"/>
    <property type="chains" value="A/B/C/D=1-209"/>
</dbReference>
<dbReference type="PDBsum" id="1O5O"/>
<dbReference type="SMR" id="Q9WZI0"/>
<dbReference type="FunCoup" id="Q9WZI0">
    <property type="interactions" value="342"/>
</dbReference>
<dbReference type="STRING" id="243274.TM_0721"/>
<dbReference type="DrugBank" id="DB03685">
    <property type="generic name" value="Uridine monophosphate"/>
</dbReference>
<dbReference type="PaxDb" id="243274-THEMA_01055"/>
<dbReference type="EnsemblBacteria" id="AAD35803">
    <property type="protein sequence ID" value="AAD35803"/>
    <property type="gene ID" value="TM_0721"/>
</dbReference>
<dbReference type="KEGG" id="tma:TM0721"/>
<dbReference type="KEGG" id="tmi:THEMA_01055"/>
<dbReference type="KEGG" id="tmm:Tmari_0722"/>
<dbReference type="KEGG" id="tmw:THMA_0737"/>
<dbReference type="eggNOG" id="COG0035">
    <property type="taxonomic scope" value="Bacteria"/>
</dbReference>
<dbReference type="InParanoid" id="Q9WZI0"/>
<dbReference type="OrthoDB" id="9781675at2"/>
<dbReference type="UniPathway" id="UPA00574">
    <property type="reaction ID" value="UER00636"/>
</dbReference>
<dbReference type="EvolutionaryTrace" id="Q9WZI0"/>
<dbReference type="Proteomes" id="UP000008183">
    <property type="component" value="Chromosome"/>
</dbReference>
<dbReference type="GO" id="GO:0005737">
    <property type="term" value="C:cytoplasm"/>
    <property type="evidence" value="ECO:0000318"/>
    <property type="project" value="GO_Central"/>
</dbReference>
<dbReference type="GO" id="GO:0005525">
    <property type="term" value="F:GTP binding"/>
    <property type="evidence" value="ECO:0007669"/>
    <property type="project" value="UniProtKB-KW"/>
</dbReference>
<dbReference type="GO" id="GO:0000287">
    <property type="term" value="F:magnesium ion binding"/>
    <property type="evidence" value="ECO:0007669"/>
    <property type="project" value="UniProtKB-UniRule"/>
</dbReference>
<dbReference type="GO" id="GO:0004845">
    <property type="term" value="F:uracil phosphoribosyltransferase activity"/>
    <property type="evidence" value="ECO:0000318"/>
    <property type="project" value="GO_Central"/>
</dbReference>
<dbReference type="GO" id="GO:0044206">
    <property type="term" value="P:UMP salvage"/>
    <property type="evidence" value="ECO:0007669"/>
    <property type="project" value="UniProtKB-UniRule"/>
</dbReference>
<dbReference type="GO" id="GO:0006223">
    <property type="term" value="P:uracil salvage"/>
    <property type="evidence" value="ECO:0007669"/>
    <property type="project" value="InterPro"/>
</dbReference>
<dbReference type="CDD" id="cd06223">
    <property type="entry name" value="PRTases_typeI"/>
    <property type="match status" value="1"/>
</dbReference>
<dbReference type="FunFam" id="3.40.50.2020:FF:000003">
    <property type="entry name" value="Uracil phosphoribosyltransferase"/>
    <property type="match status" value="1"/>
</dbReference>
<dbReference type="Gene3D" id="3.40.50.2020">
    <property type="match status" value="1"/>
</dbReference>
<dbReference type="HAMAP" id="MF_01218_B">
    <property type="entry name" value="Upp_B"/>
    <property type="match status" value="1"/>
</dbReference>
<dbReference type="InterPro" id="IPR000836">
    <property type="entry name" value="PRibTrfase_dom"/>
</dbReference>
<dbReference type="InterPro" id="IPR029057">
    <property type="entry name" value="PRTase-like"/>
</dbReference>
<dbReference type="InterPro" id="IPR034332">
    <property type="entry name" value="Upp_B"/>
</dbReference>
<dbReference type="InterPro" id="IPR050054">
    <property type="entry name" value="UPRTase/APRTase"/>
</dbReference>
<dbReference type="InterPro" id="IPR005765">
    <property type="entry name" value="Ura_phspho_trans"/>
</dbReference>
<dbReference type="NCBIfam" id="NF001097">
    <property type="entry name" value="PRK00129.1"/>
    <property type="match status" value="1"/>
</dbReference>
<dbReference type="NCBIfam" id="TIGR01091">
    <property type="entry name" value="upp"/>
    <property type="match status" value="1"/>
</dbReference>
<dbReference type="PANTHER" id="PTHR32315">
    <property type="entry name" value="ADENINE PHOSPHORIBOSYLTRANSFERASE"/>
    <property type="match status" value="1"/>
</dbReference>
<dbReference type="PANTHER" id="PTHR32315:SF4">
    <property type="entry name" value="URACIL PHOSPHORIBOSYLTRANSFERASE, CHLOROPLASTIC"/>
    <property type="match status" value="1"/>
</dbReference>
<dbReference type="Pfam" id="PF14681">
    <property type="entry name" value="UPRTase"/>
    <property type="match status" value="1"/>
</dbReference>
<dbReference type="SUPFAM" id="SSF53271">
    <property type="entry name" value="PRTase-like"/>
    <property type="match status" value="1"/>
</dbReference>
<gene>
    <name evidence="1" type="primary">upp</name>
    <name type="ordered locus">TM_0721</name>
</gene>
<organism>
    <name type="scientific">Thermotoga maritima (strain ATCC 43589 / DSM 3109 / JCM 10099 / NBRC 100826 / MSB8)</name>
    <dbReference type="NCBI Taxonomy" id="243274"/>
    <lineage>
        <taxon>Bacteria</taxon>
        <taxon>Thermotogati</taxon>
        <taxon>Thermotogota</taxon>
        <taxon>Thermotogae</taxon>
        <taxon>Thermotogales</taxon>
        <taxon>Thermotogaceae</taxon>
        <taxon>Thermotoga</taxon>
    </lineage>
</organism>